<dbReference type="EMBL" id="CU928161">
    <property type="protein sequence ID" value="CAR05561.1"/>
    <property type="molecule type" value="Genomic_DNA"/>
</dbReference>
<dbReference type="RefSeq" id="WP_001293344.1">
    <property type="nucleotide sequence ID" value="NC_011742.1"/>
</dbReference>
<dbReference type="SMR" id="B7MI63"/>
<dbReference type="KEGG" id="ecz:ECS88_4381"/>
<dbReference type="HOGENOM" id="CLU_033123_0_0_6"/>
<dbReference type="Proteomes" id="UP000000747">
    <property type="component" value="Chromosome"/>
</dbReference>
<dbReference type="GO" id="GO:0009376">
    <property type="term" value="C:HslUV protease complex"/>
    <property type="evidence" value="ECO:0007669"/>
    <property type="project" value="UniProtKB-UniRule"/>
</dbReference>
<dbReference type="GO" id="GO:0005524">
    <property type="term" value="F:ATP binding"/>
    <property type="evidence" value="ECO:0007669"/>
    <property type="project" value="UniProtKB-UniRule"/>
</dbReference>
<dbReference type="GO" id="GO:0016887">
    <property type="term" value="F:ATP hydrolysis activity"/>
    <property type="evidence" value="ECO:0007669"/>
    <property type="project" value="InterPro"/>
</dbReference>
<dbReference type="GO" id="GO:0008233">
    <property type="term" value="F:peptidase activity"/>
    <property type="evidence" value="ECO:0007669"/>
    <property type="project" value="InterPro"/>
</dbReference>
<dbReference type="GO" id="GO:0036402">
    <property type="term" value="F:proteasome-activating activity"/>
    <property type="evidence" value="ECO:0007669"/>
    <property type="project" value="UniProtKB-UniRule"/>
</dbReference>
<dbReference type="GO" id="GO:0043335">
    <property type="term" value="P:protein unfolding"/>
    <property type="evidence" value="ECO:0007669"/>
    <property type="project" value="UniProtKB-UniRule"/>
</dbReference>
<dbReference type="GO" id="GO:0051603">
    <property type="term" value="P:proteolysis involved in protein catabolic process"/>
    <property type="evidence" value="ECO:0007669"/>
    <property type="project" value="TreeGrafter"/>
</dbReference>
<dbReference type="CDD" id="cd19498">
    <property type="entry name" value="RecA-like_HslU"/>
    <property type="match status" value="1"/>
</dbReference>
<dbReference type="FunFam" id="1.10.8.10:FF:000012">
    <property type="entry name" value="ATP-dependent protease ATPase subunit HslU"/>
    <property type="match status" value="1"/>
</dbReference>
<dbReference type="FunFam" id="1.10.8.10:FF:000028">
    <property type="entry name" value="ATP-dependent protease ATPase subunit HslU"/>
    <property type="match status" value="1"/>
</dbReference>
<dbReference type="FunFam" id="1.10.8.60:FF:000027">
    <property type="entry name" value="ATP-dependent protease ATPase subunit HslU"/>
    <property type="match status" value="1"/>
</dbReference>
<dbReference type="FunFam" id="3.40.50.300:FF:000213">
    <property type="entry name" value="ATP-dependent protease ATPase subunit HslU"/>
    <property type="match status" value="1"/>
</dbReference>
<dbReference type="FunFam" id="3.40.50.300:FF:000220">
    <property type="entry name" value="ATP-dependent protease ATPase subunit HslU"/>
    <property type="match status" value="1"/>
</dbReference>
<dbReference type="Gene3D" id="1.10.8.60">
    <property type="match status" value="1"/>
</dbReference>
<dbReference type="Gene3D" id="1.10.8.10">
    <property type="entry name" value="DNA helicase RuvA subunit, C-terminal domain"/>
    <property type="match status" value="2"/>
</dbReference>
<dbReference type="Gene3D" id="3.40.50.300">
    <property type="entry name" value="P-loop containing nucleotide triphosphate hydrolases"/>
    <property type="match status" value="1"/>
</dbReference>
<dbReference type="HAMAP" id="MF_00249">
    <property type="entry name" value="HslU"/>
    <property type="match status" value="1"/>
</dbReference>
<dbReference type="InterPro" id="IPR003593">
    <property type="entry name" value="AAA+_ATPase"/>
</dbReference>
<dbReference type="InterPro" id="IPR050052">
    <property type="entry name" value="ATP-dep_Clp_protease_ClpX"/>
</dbReference>
<dbReference type="InterPro" id="IPR003959">
    <property type="entry name" value="ATPase_AAA_core"/>
</dbReference>
<dbReference type="InterPro" id="IPR019489">
    <property type="entry name" value="Clp_ATPase_C"/>
</dbReference>
<dbReference type="InterPro" id="IPR004491">
    <property type="entry name" value="HslU"/>
</dbReference>
<dbReference type="InterPro" id="IPR027417">
    <property type="entry name" value="P-loop_NTPase"/>
</dbReference>
<dbReference type="NCBIfam" id="TIGR00390">
    <property type="entry name" value="hslU"/>
    <property type="match status" value="1"/>
</dbReference>
<dbReference type="NCBIfam" id="NF003544">
    <property type="entry name" value="PRK05201.1"/>
    <property type="match status" value="1"/>
</dbReference>
<dbReference type="PANTHER" id="PTHR48102">
    <property type="entry name" value="ATP-DEPENDENT CLP PROTEASE ATP-BINDING SUBUNIT CLPX-LIKE, MITOCHONDRIAL-RELATED"/>
    <property type="match status" value="1"/>
</dbReference>
<dbReference type="PANTHER" id="PTHR48102:SF3">
    <property type="entry name" value="ATP-DEPENDENT PROTEASE ATPASE SUBUNIT HSLU"/>
    <property type="match status" value="1"/>
</dbReference>
<dbReference type="Pfam" id="PF00004">
    <property type="entry name" value="AAA"/>
    <property type="match status" value="1"/>
</dbReference>
<dbReference type="Pfam" id="PF07724">
    <property type="entry name" value="AAA_2"/>
    <property type="match status" value="1"/>
</dbReference>
<dbReference type="SMART" id="SM00382">
    <property type="entry name" value="AAA"/>
    <property type="match status" value="1"/>
</dbReference>
<dbReference type="SMART" id="SM01086">
    <property type="entry name" value="ClpB_D2-small"/>
    <property type="match status" value="1"/>
</dbReference>
<dbReference type="SUPFAM" id="SSF52540">
    <property type="entry name" value="P-loop containing nucleoside triphosphate hydrolases"/>
    <property type="match status" value="1"/>
</dbReference>
<proteinExistence type="inferred from homology"/>
<reference key="1">
    <citation type="journal article" date="2009" name="PLoS Genet.">
        <title>Organised genome dynamics in the Escherichia coli species results in highly diverse adaptive paths.</title>
        <authorList>
            <person name="Touchon M."/>
            <person name="Hoede C."/>
            <person name="Tenaillon O."/>
            <person name="Barbe V."/>
            <person name="Baeriswyl S."/>
            <person name="Bidet P."/>
            <person name="Bingen E."/>
            <person name="Bonacorsi S."/>
            <person name="Bouchier C."/>
            <person name="Bouvet O."/>
            <person name="Calteau A."/>
            <person name="Chiapello H."/>
            <person name="Clermont O."/>
            <person name="Cruveiller S."/>
            <person name="Danchin A."/>
            <person name="Diard M."/>
            <person name="Dossat C."/>
            <person name="Karoui M.E."/>
            <person name="Frapy E."/>
            <person name="Garry L."/>
            <person name="Ghigo J.M."/>
            <person name="Gilles A.M."/>
            <person name="Johnson J."/>
            <person name="Le Bouguenec C."/>
            <person name="Lescat M."/>
            <person name="Mangenot S."/>
            <person name="Martinez-Jehanne V."/>
            <person name="Matic I."/>
            <person name="Nassif X."/>
            <person name="Oztas S."/>
            <person name="Petit M.A."/>
            <person name="Pichon C."/>
            <person name="Rouy Z."/>
            <person name="Ruf C.S."/>
            <person name="Schneider D."/>
            <person name="Tourret J."/>
            <person name="Vacherie B."/>
            <person name="Vallenet D."/>
            <person name="Medigue C."/>
            <person name="Rocha E.P.C."/>
            <person name="Denamur E."/>
        </authorList>
    </citation>
    <scope>NUCLEOTIDE SEQUENCE [LARGE SCALE GENOMIC DNA]</scope>
    <source>
        <strain>S88 / ExPEC</strain>
    </source>
</reference>
<accession>B7MI63</accession>
<comment type="function">
    <text evidence="1">ATPase subunit of a proteasome-like degradation complex; this subunit has chaperone activity. The binding of ATP and its subsequent hydrolysis by HslU are essential for unfolding of protein substrates subsequently hydrolyzed by HslV. HslU recognizes the N-terminal part of its protein substrates and unfolds these before they are guided to HslV for hydrolysis.</text>
</comment>
<comment type="subunit">
    <text evidence="1">A double ring-shaped homohexamer of HslV is capped on each side by a ring-shaped HslU homohexamer. The assembly of the HslU/HslV complex is dependent on binding of ATP.</text>
</comment>
<comment type="subcellular location">
    <subcellularLocation>
        <location evidence="1">Cytoplasm</location>
    </subcellularLocation>
</comment>
<comment type="induction">
    <text evidence="1">By heat shock.</text>
</comment>
<comment type="similarity">
    <text evidence="1">Belongs to the ClpX chaperone family. HslU subfamily.</text>
</comment>
<gene>
    <name evidence="1" type="primary">hslU</name>
    <name type="ordered locus">ECS88_4381</name>
</gene>
<evidence type="ECO:0000255" key="1">
    <source>
        <dbReference type="HAMAP-Rule" id="MF_00249"/>
    </source>
</evidence>
<keyword id="KW-0067">ATP-binding</keyword>
<keyword id="KW-0143">Chaperone</keyword>
<keyword id="KW-0963">Cytoplasm</keyword>
<keyword id="KW-0547">Nucleotide-binding</keyword>
<keyword id="KW-1185">Reference proteome</keyword>
<keyword id="KW-0346">Stress response</keyword>
<name>HSLU_ECO45</name>
<feature type="chain" id="PRO_1000119102" description="ATP-dependent protease ATPase subunit HslU">
    <location>
        <begin position="1"/>
        <end position="443"/>
    </location>
</feature>
<feature type="binding site" evidence="1">
    <location>
        <position position="18"/>
    </location>
    <ligand>
        <name>ATP</name>
        <dbReference type="ChEBI" id="CHEBI:30616"/>
    </ligand>
</feature>
<feature type="binding site" evidence="1">
    <location>
        <begin position="60"/>
        <end position="65"/>
    </location>
    <ligand>
        <name>ATP</name>
        <dbReference type="ChEBI" id="CHEBI:30616"/>
    </ligand>
</feature>
<feature type="binding site" evidence="1">
    <location>
        <position position="256"/>
    </location>
    <ligand>
        <name>ATP</name>
        <dbReference type="ChEBI" id="CHEBI:30616"/>
    </ligand>
</feature>
<feature type="binding site" evidence="1">
    <location>
        <position position="321"/>
    </location>
    <ligand>
        <name>ATP</name>
        <dbReference type="ChEBI" id="CHEBI:30616"/>
    </ligand>
</feature>
<feature type="binding site" evidence="1">
    <location>
        <position position="393"/>
    </location>
    <ligand>
        <name>ATP</name>
        <dbReference type="ChEBI" id="CHEBI:30616"/>
    </ligand>
</feature>
<protein>
    <recommendedName>
        <fullName evidence="1">ATP-dependent protease ATPase subunit HslU</fullName>
    </recommendedName>
    <alternativeName>
        <fullName evidence="1">Heat shock protein HslU</fullName>
    </alternativeName>
    <alternativeName>
        <fullName evidence="1">Unfoldase HslU</fullName>
    </alternativeName>
</protein>
<organism>
    <name type="scientific">Escherichia coli O45:K1 (strain S88 / ExPEC)</name>
    <dbReference type="NCBI Taxonomy" id="585035"/>
    <lineage>
        <taxon>Bacteria</taxon>
        <taxon>Pseudomonadati</taxon>
        <taxon>Pseudomonadota</taxon>
        <taxon>Gammaproteobacteria</taxon>
        <taxon>Enterobacterales</taxon>
        <taxon>Enterobacteriaceae</taxon>
        <taxon>Escherichia</taxon>
    </lineage>
</organism>
<sequence length="443" mass="49581">MSEMTPREIVSELDKHIIGQDNAKRSVAIALRNRWRRMQLNEELRHEVTPKNILMIGPTGVGKTEIARRLAKLANAPFIKVEATKFTEVGYVGKEVDSIIRDLTDAAVKMVRVQAIEKNRYRAEELAEERILDVLIPPAKNNWGQTEQQQEPSAARQAFRKKLREGQLDDKEIEIDLAAAPMGVEIMAPPGMEEMTSQLQSMFQNLGGQKQKARKLKIKDAMKLLIEEEAAKLVNPEELKQDAIDAVEQHGIVFIDEIDKICKRGESSGPDVSREGVQRDLLPLVEGCTVSTKHGMVKTDHILFIASGAFQIAKPSDLIPELQGRLPIRVELQALTTSDFERILTEPNASITVQYKALMATEGVNIEFTDSGIKRIAEAAWQVNESTENIGARRLHTVLERLMEEISYDASDLSGQTITIDADYVSKHLDALVADEDLSRFIL</sequence>